<protein>
    <recommendedName>
        <fullName evidence="1">Probable nicotinate-nucleotide adenylyltransferase</fullName>
        <ecNumber evidence="1">2.7.7.18</ecNumber>
    </recommendedName>
    <alternativeName>
        <fullName evidence="1">Deamido-NAD(+) diphosphorylase</fullName>
    </alternativeName>
    <alternativeName>
        <fullName evidence="1">Deamido-NAD(+) pyrophosphorylase</fullName>
    </alternativeName>
    <alternativeName>
        <fullName evidence="1">Nicotinate mononucleotide adenylyltransferase</fullName>
        <shortName evidence="1">NaMN adenylyltransferase</shortName>
    </alternativeName>
</protein>
<gene>
    <name evidence="1" type="primary">nadD</name>
    <name type="ordered locus">CFF8240_1430</name>
</gene>
<evidence type="ECO:0000255" key="1">
    <source>
        <dbReference type="HAMAP-Rule" id="MF_00244"/>
    </source>
</evidence>
<feature type="chain" id="PRO_0000310102" description="Probable nicotinate-nucleotide adenylyltransferase">
    <location>
        <begin position="1"/>
        <end position="181"/>
    </location>
</feature>
<dbReference type="EC" id="2.7.7.18" evidence="1"/>
<dbReference type="EMBL" id="CP000487">
    <property type="protein sequence ID" value="ABK82679.1"/>
    <property type="molecule type" value="Genomic_DNA"/>
</dbReference>
<dbReference type="RefSeq" id="WP_010399947.1">
    <property type="nucleotide sequence ID" value="NC_008599.1"/>
</dbReference>
<dbReference type="SMR" id="A0RQT6"/>
<dbReference type="GeneID" id="61065249"/>
<dbReference type="KEGG" id="cff:CFF8240_1430"/>
<dbReference type="eggNOG" id="COG1057">
    <property type="taxonomic scope" value="Bacteria"/>
</dbReference>
<dbReference type="HOGENOM" id="CLU_069765_3_2_7"/>
<dbReference type="UniPathway" id="UPA00253">
    <property type="reaction ID" value="UER00332"/>
</dbReference>
<dbReference type="Proteomes" id="UP000000760">
    <property type="component" value="Chromosome"/>
</dbReference>
<dbReference type="GO" id="GO:0005524">
    <property type="term" value="F:ATP binding"/>
    <property type="evidence" value="ECO:0007669"/>
    <property type="project" value="UniProtKB-KW"/>
</dbReference>
<dbReference type="GO" id="GO:0004515">
    <property type="term" value="F:nicotinate-nucleotide adenylyltransferase activity"/>
    <property type="evidence" value="ECO:0007669"/>
    <property type="project" value="UniProtKB-UniRule"/>
</dbReference>
<dbReference type="GO" id="GO:0009435">
    <property type="term" value="P:NAD biosynthetic process"/>
    <property type="evidence" value="ECO:0007669"/>
    <property type="project" value="UniProtKB-UniRule"/>
</dbReference>
<dbReference type="CDD" id="cd02165">
    <property type="entry name" value="NMNAT"/>
    <property type="match status" value="1"/>
</dbReference>
<dbReference type="Gene3D" id="3.40.50.620">
    <property type="entry name" value="HUPs"/>
    <property type="match status" value="1"/>
</dbReference>
<dbReference type="HAMAP" id="MF_00244">
    <property type="entry name" value="NaMN_adenylyltr"/>
    <property type="match status" value="1"/>
</dbReference>
<dbReference type="InterPro" id="IPR004821">
    <property type="entry name" value="Cyt_trans-like"/>
</dbReference>
<dbReference type="InterPro" id="IPR005248">
    <property type="entry name" value="NadD/NMNAT"/>
</dbReference>
<dbReference type="InterPro" id="IPR014729">
    <property type="entry name" value="Rossmann-like_a/b/a_fold"/>
</dbReference>
<dbReference type="NCBIfam" id="TIGR00482">
    <property type="entry name" value="nicotinate (nicotinamide) nucleotide adenylyltransferase"/>
    <property type="match status" value="1"/>
</dbReference>
<dbReference type="PANTHER" id="PTHR39321">
    <property type="entry name" value="NICOTINATE-NUCLEOTIDE ADENYLYLTRANSFERASE-RELATED"/>
    <property type="match status" value="1"/>
</dbReference>
<dbReference type="PANTHER" id="PTHR39321:SF3">
    <property type="entry name" value="PHOSPHOPANTETHEINE ADENYLYLTRANSFERASE"/>
    <property type="match status" value="1"/>
</dbReference>
<dbReference type="Pfam" id="PF01467">
    <property type="entry name" value="CTP_transf_like"/>
    <property type="match status" value="1"/>
</dbReference>
<dbReference type="SUPFAM" id="SSF52374">
    <property type="entry name" value="Nucleotidylyl transferase"/>
    <property type="match status" value="1"/>
</dbReference>
<name>NADD_CAMFF</name>
<sequence length="181" mass="20881">MNIAIFGGSFDPPHNAHDAIVKAALLNLKIDKLIIIPTYLNPFKTEFGADPKKRLVWCEALWQNLDKVEISKFEIEQNRAVPSLESVLHFKKIYNPDIVYLIIGADQLINLEKWYKFKVLKKLVNFVVASRDDIEIPSNLQKLNINVKISSTKVRNELDFCQVPKAVLEDVIKFYKEKNAR</sequence>
<reference key="1">
    <citation type="submission" date="2006-11" db="EMBL/GenBank/DDBJ databases">
        <title>Sequence of Campylobacter fetus subsp. fetus 82-40.</title>
        <authorList>
            <person name="Fouts D.E."/>
            <person name="Nelson K.E."/>
        </authorList>
    </citation>
    <scope>NUCLEOTIDE SEQUENCE [LARGE SCALE GENOMIC DNA]</scope>
    <source>
        <strain>82-40</strain>
    </source>
</reference>
<accession>A0RQT6</accession>
<proteinExistence type="inferred from homology"/>
<organism>
    <name type="scientific">Campylobacter fetus subsp. fetus (strain 82-40)</name>
    <dbReference type="NCBI Taxonomy" id="360106"/>
    <lineage>
        <taxon>Bacteria</taxon>
        <taxon>Pseudomonadati</taxon>
        <taxon>Campylobacterota</taxon>
        <taxon>Epsilonproteobacteria</taxon>
        <taxon>Campylobacterales</taxon>
        <taxon>Campylobacteraceae</taxon>
        <taxon>Campylobacter</taxon>
    </lineage>
</organism>
<comment type="function">
    <text evidence="1">Catalyzes the reversible adenylation of nicotinate mononucleotide (NaMN) to nicotinic acid adenine dinucleotide (NaAD).</text>
</comment>
<comment type="catalytic activity">
    <reaction evidence="1">
        <text>nicotinate beta-D-ribonucleotide + ATP + H(+) = deamido-NAD(+) + diphosphate</text>
        <dbReference type="Rhea" id="RHEA:22860"/>
        <dbReference type="ChEBI" id="CHEBI:15378"/>
        <dbReference type="ChEBI" id="CHEBI:30616"/>
        <dbReference type="ChEBI" id="CHEBI:33019"/>
        <dbReference type="ChEBI" id="CHEBI:57502"/>
        <dbReference type="ChEBI" id="CHEBI:58437"/>
        <dbReference type="EC" id="2.7.7.18"/>
    </reaction>
</comment>
<comment type="pathway">
    <text evidence="1">Cofactor biosynthesis; NAD(+) biosynthesis; deamido-NAD(+) from nicotinate D-ribonucleotide: step 1/1.</text>
</comment>
<comment type="similarity">
    <text evidence="1">Belongs to the NadD family.</text>
</comment>
<keyword id="KW-0067">ATP-binding</keyword>
<keyword id="KW-0520">NAD</keyword>
<keyword id="KW-0547">Nucleotide-binding</keyword>
<keyword id="KW-0548">Nucleotidyltransferase</keyword>
<keyword id="KW-0662">Pyridine nucleotide biosynthesis</keyword>
<keyword id="KW-0808">Transferase</keyword>